<sequence>MTAFSFKKEDRLLKRYEFIEIFTSGKTVHSSCFLAGIKKNRKERIRLGITVSKKVGKAARRNRIKRHVREFFRLHRDNLSNCWDINVIAKKKAVNASPAELERSLAELFHKSSREFPSDRQ</sequence>
<feature type="chain" id="PRO_1000194631" description="Ribonuclease P protein component">
    <location>
        <begin position="1"/>
        <end position="121"/>
    </location>
</feature>
<protein>
    <recommendedName>
        <fullName evidence="1">Ribonuclease P protein component</fullName>
        <shortName evidence="1">RNase P protein</shortName>
        <shortName evidence="1">RNaseP protein</shortName>
        <ecNumber evidence="1">3.1.26.5</ecNumber>
    </recommendedName>
    <alternativeName>
        <fullName evidence="1">Protein C5</fullName>
    </alternativeName>
</protein>
<keyword id="KW-0255">Endonuclease</keyword>
<keyword id="KW-0378">Hydrolase</keyword>
<keyword id="KW-0540">Nuclease</keyword>
<keyword id="KW-1185">Reference proteome</keyword>
<keyword id="KW-0694">RNA-binding</keyword>
<keyword id="KW-0819">tRNA processing</keyword>
<reference key="1">
    <citation type="submission" date="2007-10" db="EMBL/GenBank/DDBJ databases">
        <title>Complete sequence of Desulfococcus oleovorans Hxd3.</title>
        <authorList>
            <consortium name="US DOE Joint Genome Institute"/>
            <person name="Copeland A."/>
            <person name="Lucas S."/>
            <person name="Lapidus A."/>
            <person name="Barry K."/>
            <person name="Glavina del Rio T."/>
            <person name="Dalin E."/>
            <person name="Tice H."/>
            <person name="Pitluck S."/>
            <person name="Kiss H."/>
            <person name="Brettin T."/>
            <person name="Bruce D."/>
            <person name="Detter J.C."/>
            <person name="Han C."/>
            <person name="Schmutz J."/>
            <person name="Larimer F."/>
            <person name="Land M."/>
            <person name="Hauser L."/>
            <person name="Kyrpides N."/>
            <person name="Kim E."/>
            <person name="Wawrik B."/>
            <person name="Richardson P."/>
        </authorList>
    </citation>
    <scope>NUCLEOTIDE SEQUENCE [LARGE SCALE GENOMIC DNA]</scope>
    <source>
        <strain>DSM 6200 / JCM 39069 / Hxd3</strain>
    </source>
</reference>
<comment type="function">
    <text evidence="1">RNaseP catalyzes the removal of the 5'-leader sequence from pre-tRNA to produce the mature 5'-terminus. It can also cleave other RNA substrates such as 4.5S RNA. The protein component plays an auxiliary but essential role in vivo by binding to the 5'-leader sequence and broadening the substrate specificity of the ribozyme.</text>
</comment>
<comment type="catalytic activity">
    <reaction evidence="1">
        <text>Endonucleolytic cleavage of RNA, removing 5'-extranucleotides from tRNA precursor.</text>
        <dbReference type="EC" id="3.1.26.5"/>
    </reaction>
</comment>
<comment type="subunit">
    <text evidence="1">Consists of a catalytic RNA component (M1 or rnpB) and a protein subunit.</text>
</comment>
<comment type="similarity">
    <text evidence="1">Belongs to the RnpA family.</text>
</comment>
<name>RNPA_DESOH</name>
<accession>A8ZRZ3</accession>
<organism>
    <name type="scientific">Desulfosudis oleivorans (strain DSM 6200 / JCM 39069 / Hxd3)</name>
    <name type="common">Desulfococcus oleovorans</name>
    <dbReference type="NCBI Taxonomy" id="96561"/>
    <lineage>
        <taxon>Bacteria</taxon>
        <taxon>Pseudomonadati</taxon>
        <taxon>Thermodesulfobacteriota</taxon>
        <taxon>Desulfobacteria</taxon>
        <taxon>Desulfobacterales</taxon>
        <taxon>Desulfosudaceae</taxon>
        <taxon>Desulfosudis</taxon>
    </lineage>
</organism>
<evidence type="ECO:0000255" key="1">
    <source>
        <dbReference type="HAMAP-Rule" id="MF_00227"/>
    </source>
</evidence>
<proteinExistence type="inferred from homology"/>
<gene>
    <name evidence="1" type="primary">rnpA</name>
    <name type="ordered locus">Dole_0100</name>
</gene>
<dbReference type="EC" id="3.1.26.5" evidence="1"/>
<dbReference type="EMBL" id="CP000859">
    <property type="protein sequence ID" value="ABW65910.1"/>
    <property type="molecule type" value="Genomic_DNA"/>
</dbReference>
<dbReference type="RefSeq" id="WP_012173529.1">
    <property type="nucleotide sequence ID" value="NC_009943.1"/>
</dbReference>
<dbReference type="SMR" id="A8ZRZ3"/>
<dbReference type="STRING" id="96561.Dole_0100"/>
<dbReference type="KEGG" id="dol:Dole_0100"/>
<dbReference type="eggNOG" id="COG0594">
    <property type="taxonomic scope" value="Bacteria"/>
</dbReference>
<dbReference type="HOGENOM" id="CLU_117179_9_3_7"/>
<dbReference type="Proteomes" id="UP000008561">
    <property type="component" value="Chromosome"/>
</dbReference>
<dbReference type="GO" id="GO:0030677">
    <property type="term" value="C:ribonuclease P complex"/>
    <property type="evidence" value="ECO:0007669"/>
    <property type="project" value="TreeGrafter"/>
</dbReference>
<dbReference type="GO" id="GO:0042781">
    <property type="term" value="F:3'-tRNA processing endoribonuclease activity"/>
    <property type="evidence" value="ECO:0007669"/>
    <property type="project" value="TreeGrafter"/>
</dbReference>
<dbReference type="GO" id="GO:0004526">
    <property type="term" value="F:ribonuclease P activity"/>
    <property type="evidence" value="ECO:0007669"/>
    <property type="project" value="UniProtKB-UniRule"/>
</dbReference>
<dbReference type="GO" id="GO:0000049">
    <property type="term" value="F:tRNA binding"/>
    <property type="evidence" value="ECO:0007669"/>
    <property type="project" value="UniProtKB-UniRule"/>
</dbReference>
<dbReference type="GO" id="GO:0001682">
    <property type="term" value="P:tRNA 5'-leader removal"/>
    <property type="evidence" value="ECO:0007669"/>
    <property type="project" value="UniProtKB-UniRule"/>
</dbReference>
<dbReference type="Gene3D" id="3.30.230.10">
    <property type="match status" value="1"/>
</dbReference>
<dbReference type="HAMAP" id="MF_00227">
    <property type="entry name" value="RNase_P"/>
    <property type="match status" value="1"/>
</dbReference>
<dbReference type="InterPro" id="IPR020568">
    <property type="entry name" value="Ribosomal_Su5_D2-typ_SF"/>
</dbReference>
<dbReference type="InterPro" id="IPR014721">
    <property type="entry name" value="Ribsml_uS5_D2-typ_fold_subgr"/>
</dbReference>
<dbReference type="InterPro" id="IPR000100">
    <property type="entry name" value="RNase_P"/>
</dbReference>
<dbReference type="InterPro" id="IPR020539">
    <property type="entry name" value="RNase_P_CS"/>
</dbReference>
<dbReference type="NCBIfam" id="TIGR00188">
    <property type="entry name" value="rnpA"/>
    <property type="match status" value="1"/>
</dbReference>
<dbReference type="PANTHER" id="PTHR33992">
    <property type="entry name" value="RIBONUCLEASE P PROTEIN COMPONENT"/>
    <property type="match status" value="1"/>
</dbReference>
<dbReference type="PANTHER" id="PTHR33992:SF1">
    <property type="entry name" value="RIBONUCLEASE P PROTEIN COMPONENT"/>
    <property type="match status" value="1"/>
</dbReference>
<dbReference type="Pfam" id="PF00825">
    <property type="entry name" value="Ribonuclease_P"/>
    <property type="match status" value="1"/>
</dbReference>
<dbReference type="SUPFAM" id="SSF54211">
    <property type="entry name" value="Ribosomal protein S5 domain 2-like"/>
    <property type="match status" value="1"/>
</dbReference>
<dbReference type="PROSITE" id="PS00648">
    <property type="entry name" value="RIBONUCLEASE_P"/>
    <property type="match status" value="1"/>
</dbReference>